<comment type="function">
    <text evidence="1">Functions as an E3 ubiquitin ligase.</text>
</comment>
<comment type="catalytic activity">
    <reaction>
        <text>S-ubiquitinyl-[E2 ubiquitin-conjugating enzyme]-L-cysteine + [acceptor protein]-L-lysine = [E2 ubiquitin-conjugating enzyme]-L-cysteine + N(6)-ubiquitinyl-[acceptor protein]-L-lysine.</text>
        <dbReference type="EC" id="2.3.2.27"/>
    </reaction>
</comment>
<comment type="pathway">
    <text>Protein modification; protein ubiquitination.</text>
</comment>
<comment type="sequence caution" evidence="3">
    <conflict type="erroneous gene model prediction">
        <sequence resource="EMBL-CDS" id="BAB09966"/>
    </conflict>
</comment>
<sequence length="363" mass="39371">MSGKGLSPAPFNAQPMIVQDADPLRFRVGEQDPKTREFAAFIGDHRYFAAAAAAAAAANPHPHLEFRQNFYSEKPIIGNPNDSGGSDGEDDVDVEEEDEDDDLDGNEGDIGMNKDAGEDSVSAGAVIVVGQDNAAYYSQHFKTVEASFVSRNEESSIAADNGCDFSGRRDLSSSSSNSIESLRTILSDPTTGSLMADAMILPCGHTFGAGGIEQVKQMKACCTCSQPVSEDSITPNLTLRVAVQAFCREENSQSNHPSKRKREGFDQERRAFGVTNHSGRSRNKSNHFPFAVADRVIIKGNKRTPPRFVGREAVVTTQCLNGWYVVKTLDNAESVKLQYRSLAKAPEDPSAKATPNKMVSNWL</sequence>
<gene>
    <name type="primary">PUB62</name>
    <name type="ordered locus">At5g05230</name>
    <name type="ORF">K18I23.3</name>
</gene>
<name>PUB62_ARATH</name>
<accession>Q6DBN5</accession>
<accession>Q9FLD1</accession>
<keyword id="KW-1185">Reference proteome</keyword>
<keyword id="KW-0808">Transferase</keyword>
<keyword id="KW-0833">Ubl conjugation pathway</keyword>
<organism>
    <name type="scientific">Arabidopsis thaliana</name>
    <name type="common">Mouse-ear cress</name>
    <dbReference type="NCBI Taxonomy" id="3702"/>
    <lineage>
        <taxon>Eukaryota</taxon>
        <taxon>Viridiplantae</taxon>
        <taxon>Streptophyta</taxon>
        <taxon>Embryophyta</taxon>
        <taxon>Tracheophyta</taxon>
        <taxon>Spermatophyta</taxon>
        <taxon>Magnoliopsida</taxon>
        <taxon>eudicotyledons</taxon>
        <taxon>Gunneridae</taxon>
        <taxon>Pentapetalae</taxon>
        <taxon>rosids</taxon>
        <taxon>malvids</taxon>
        <taxon>Brassicales</taxon>
        <taxon>Brassicaceae</taxon>
        <taxon>Camelineae</taxon>
        <taxon>Arabidopsis</taxon>
    </lineage>
</organism>
<evidence type="ECO:0000250" key="1"/>
<evidence type="ECO:0000256" key="2">
    <source>
        <dbReference type="SAM" id="MobiDB-lite"/>
    </source>
</evidence>
<evidence type="ECO:0000305" key="3"/>
<dbReference type="EC" id="2.3.2.27"/>
<dbReference type="EMBL" id="AB010692">
    <property type="protein sequence ID" value="BAB09966.1"/>
    <property type="status" value="ALT_SEQ"/>
    <property type="molecule type" value="Genomic_DNA"/>
</dbReference>
<dbReference type="EMBL" id="CP002688">
    <property type="protein sequence ID" value="AED90844.1"/>
    <property type="molecule type" value="Genomic_DNA"/>
</dbReference>
<dbReference type="EMBL" id="BT014987">
    <property type="protein sequence ID" value="AAT70438.1"/>
    <property type="molecule type" value="mRNA"/>
</dbReference>
<dbReference type="EMBL" id="BT015849">
    <property type="protein sequence ID" value="AAU94412.1"/>
    <property type="molecule type" value="mRNA"/>
</dbReference>
<dbReference type="EMBL" id="AK228492">
    <property type="protein sequence ID" value="BAF00418.1"/>
    <property type="molecule type" value="mRNA"/>
</dbReference>
<dbReference type="RefSeq" id="NP_196142.3">
    <property type="nucleotide sequence ID" value="NM_120605.4"/>
</dbReference>
<dbReference type="FunCoup" id="Q6DBN5">
    <property type="interactions" value="1738"/>
</dbReference>
<dbReference type="PaxDb" id="3702-AT5G05230.1"/>
<dbReference type="ProteomicsDB" id="226455"/>
<dbReference type="EnsemblPlants" id="AT5G05230.1">
    <property type="protein sequence ID" value="AT5G05230.1"/>
    <property type="gene ID" value="AT5G05230"/>
</dbReference>
<dbReference type="GeneID" id="830405"/>
<dbReference type="Gramene" id="AT5G05230.1">
    <property type="protein sequence ID" value="AT5G05230.1"/>
    <property type="gene ID" value="AT5G05230"/>
</dbReference>
<dbReference type="KEGG" id="ath:AT5G05230"/>
<dbReference type="Araport" id="AT5G05230"/>
<dbReference type="TAIR" id="AT5G05230"/>
<dbReference type="eggNOG" id="ENOG502QT2D">
    <property type="taxonomic scope" value="Eukaryota"/>
</dbReference>
<dbReference type="HOGENOM" id="CLU_050611_0_0_1"/>
<dbReference type="InParanoid" id="Q6DBN5"/>
<dbReference type="OMA" id="ACYTCSH"/>
<dbReference type="PhylomeDB" id="Q6DBN5"/>
<dbReference type="UniPathway" id="UPA00143"/>
<dbReference type="PRO" id="PR:Q6DBN5"/>
<dbReference type="Proteomes" id="UP000006548">
    <property type="component" value="Chromosome 5"/>
</dbReference>
<dbReference type="ExpressionAtlas" id="Q6DBN5">
    <property type="expression patterns" value="baseline and differential"/>
</dbReference>
<dbReference type="GO" id="GO:0004842">
    <property type="term" value="F:ubiquitin-protein transferase activity"/>
    <property type="evidence" value="ECO:0007669"/>
    <property type="project" value="InterPro"/>
</dbReference>
<dbReference type="GO" id="GO:0016567">
    <property type="term" value="P:protein ubiquitination"/>
    <property type="evidence" value="ECO:0007669"/>
    <property type="project" value="UniProtKB-UniPathway"/>
</dbReference>
<dbReference type="Gene3D" id="3.30.40.10">
    <property type="entry name" value="Zinc/RING finger domain, C3HC4 (zinc finger)"/>
    <property type="match status" value="1"/>
</dbReference>
<dbReference type="InterPro" id="IPR003613">
    <property type="entry name" value="Ubox_domain"/>
</dbReference>
<dbReference type="InterPro" id="IPR013083">
    <property type="entry name" value="Znf_RING/FYVE/PHD"/>
</dbReference>
<dbReference type="PANTHER" id="PTHR33644:SF5">
    <property type="entry name" value="U-BOX DOMAIN-CONTAINING PROTEIN 62"/>
    <property type="match status" value="1"/>
</dbReference>
<dbReference type="PANTHER" id="PTHR33644">
    <property type="entry name" value="U-BOX DOMAIN-CONTAINING PROTEIN 62-RELATED"/>
    <property type="match status" value="1"/>
</dbReference>
<dbReference type="Pfam" id="PF23112">
    <property type="entry name" value="PUB62-63_C"/>
    <property type="match status" value="1"/>
</dbReference>
<dbReference type="Pfam" id="PF04564">
    <property type="entry name" value="U-box"/>
    <property type="match status" value="1"/>
</dbReference>
<dbReference type="SUPFAM" id="SSF57850">
    <property type="entry name" value="RING/U-box"/>
    <property type="match status" value="1"/>
</dbReference>
<dbReference type="PROSITE" id="PS51698">
    <property type="entry name" value="U_BOX"/>
    <property type="match status" value="1"/>
</dbReference>
<feature type="chain" id="PRO_0000322194" description="U-box domain-containing protein 62">
    <location>
        <begin position="1"/>
        <end position="363"/>
    </location>
</feature>
<feature type="domain" description="U-box">
    <location>
        <begin position="181"/>
        <end position="253"/>
    </location>
</feature>
<feature type="region of interest" description="Disordered" evidence="2">
    <location>
        <begin position="74"/>
        <end position="117"/>
    </location>
</feature>
<feature type="region of interest" description="Disordered" evidence="2">
    <location>
        <begin position="343"/>
        <end position="363"/>
    </location>
</feature>
<feature type="compositionally biased region" description="Acidic residues" evidence="2">
    <location>
        <begin position="87"/>
        <end position="107"/>
    </location>
</feature>
<reference key="1">
    <citation type="journal article" date="1998" name="DNA Res.">
        <title>Structural analysis of Arabidopsis thaliana chromosome 5. V. Sequence features of the regions of 1,381,565 bp covered by twenty one physically assigned P1 and TAC clones.</title>
        <authorList>
            <person name="Kaneko T."/>
            <person name="Kotani H."/>
            <person name="Nakamura Y."/>
            <person name="Sato S."/>
            <person name="Asamizu E."/>
            <person name="Miyajima N."/>
            <person name="Tabata S."/>
        </authorList>
    </citation>
    <scope>NUCLEOTIDE SEQUENCE [LARGE SCALE GENOMIC DNA]</scope>
    <source>
        <strain>cv. Columbia</strain>
    </source>
</reference>
<reference key="2">
    <citation type="journal article" date="2017" name="Plant J.">
        <title>Araport11: a complete reannotation of the Arabidopsis thaliana reference genome.</title>
        <authorList>
            <person name="Cheng C.Y."/>
            <person name="Krishnakumar V."/>
            <person name="Chan A.P."/>
            <person name="Thibaud-Nissen F."/>
            <person name="Schobel S."/>
            <person name="Town C.D."/>
        </authorList>
    </citation>
    <scope>GENOME REANNOTATION</scope>
    <source>
        <strain>cv. Columbia</strain>
    </source>
</reference>
<reference key="3">
    <citation type="submission" date="2004-10" db="EMBL/GenBank/DDBJ databases">
        <title>Arabidopsis ORF clones.</title>
        <authorList>
            <person name="Kim C.J."/>
            <person name="Chen H."/>
            <person name="Cheuk R.F."/>
            <person name="Shinn P."/>
            <person name="Ecker J.R."/>
        </authorList>
    </citation>
    <scope>NUCLEOTIDE SEQUENCE [LARGE SCALE MRNA]</scope>
    <source>
        <strain>cv. Columbia</strain>
    </source>
</reference>
<reference key="4">
    <citation type="submission" date="2006-07" db="EMBL/GenBank/DDBJ databases">
        <title>Large-scale analysis of RIKEN Arabidopsis full-length (RAFL) cDNAs.</title>
        <authorList>
            <person name="Totoki Y."/>
            <person name="Seki M."/>
            <person name="Ishida J."/>
            <person name="Nakajima M."/>
            <person name="Enju A."/>
            <person name="Kamiya A."/>
            <person name="Narusaka M."/>
            <person name="Shin-i T."/>
            <person name="Nakagawa M."/>
            <person name="Sakamoto N."/>
            <person name="Oishi K."/>
            <person name="Kohara Y."/>
            <person name="Kobayashi M."/>
            <person name="Toyoda A."/>
            <person name="Sakaki Y."/>
            <person name="Sakurai T."/>
            <person name="Iida K."/>
            <person name="Akiyama K."/>
            <person name="Satou M."/>
            <person name="Toyoda T."/>
            <person name="Konagaya A."/>
            <person name="Carninci P."/>
            <person name="Kawai J."/>
            <person name="Hayashizaki Y."/>
            <person name="Shinozaki K."/>
        </authorList>
    </citation>
    <scope>NUCLEOTIDE SEQUENCE [LARGE SCALE MRNA]</scope>
    <source>
        <strain>cv. Columbia</strain>
    </source>
</reference>
<proteinExistence type="evidence at transcript level"/>
<protein>
    <recommendedName>
        <fullName>U-box domain-containing protein 62</fullName>
        <ecNumber>2.3.2.27</ecNumber>
    </recommendedName>
    <alternativeName>
        <fullName>Plant U-box protein 62</fullName>
    </alternativeName>
    <alternativeName>
        <fullName evidence="3">RING-type E3 ubiquitin transferase PUB62</fullName>
    </alternativeName>
</protein>